<protein>
    <recommendedName>
        <fullName evidence="1">Ubiquinone biosynthesis protein COQ4, mitochondrial</fullName>
    </recommendedName>
    <alternativeName>
        <fullName>4-hydroxy-3-methoxy-5-polyprenylbenzoate decarboxylase</fullName>
        <ecNumber evidence="1">4.1.1.130</ecNumber>
    </alternativeName>
    <alternativeName>
        <fullName evidence="1">Coenzyme Q biosynthesis protein 4</fullName>
    </alternativeName>
</protein>
<accession>C4YEV9</accession>
<gene>
    <name evidence="1" type="primary">COQ4</name>
    <name type="ORF">CAWG_01068</name>
</gene>
<proteinExistence type="inferred from homology"/>
<reference key="1">
    <citation type="journal article" date="2009" name="Nature">
        <title>Evolution of pathogenicity and sexual reproduction in eight Candida genomes.</title>
        <authorList>
            <person name="Butler G."/>
            <person name="Rasmussen M.D."/>
            <person name="Lin M.F."/>
            <person name="Santos M.A.S."/>
            <person name="Sakthikumar S."/>
            <person name="Munro C.A."/>
            <person name="Rheinbay E."/>
            <person name="Grabherr M."/>
            <person name="Forche A."/>
            <person name="Reedy J.L."/>
            <person name="Agrafioti I."/>
            <person name="Arnaud M.B."/>
            <person name="Bates S."/>
            <person name="Brown A.J.P."/>
            <person name="Brunke S."/>
            <person name="Costanzo M.C."/>
            <person name="Fitzpatrick D.A."/>
            <person name="de Groot P.W.J."/>
            <person name="Harris D."/>
            <person name="Hoyer L.L."/>
            <person name="Hube B."/>
            <person name="Klis F.M."/>
            <person name="Kodira C."/>
            <person name="Lennard N."/>
            <person name="Logue M.E."/>
            <person name="Martin R."/>
            <person name="Neiman A.M."/>
            <person name="Nikolaou E."/>
            <person name="Quail M.A."/>
            <person name="Quinn J."/>
            <person name="Santos M.C."/>
            <person name="Schmitzberger F.F."/>
            <person name="Sherlock G."/>
            <person name="Shah P."/>
            <person name="Silverstein K.A.T."/>
            <person name="Skrzypek M.S."/>
            <person name="Soll D."/>
            <person name="Staggs R."/>
            <person name="Stansfield I."/>
            <person name="Stumpf M.P.H."/>
            <person name="Sudbery P.E."/>
            <person name="Srikantha T."/>
            <person name="Zeng Q."/>
            <person name="Berman J."/>
            <person name="Berriman M."/>
            <person name="Heitman J."/>
            <person name="Gow N.A.R."/>
            <person name="Lorenz M.C."/>
            <person name="Birren B.W."/>
            <person name="Kellis M."/>
            <person name="Cuomo C.A."/>
        </authorList>
    </citation>
    <scope>NUCLEOTIDE SEQUENCE [LARGE SCALE GENOMIC DNA]</scope>
    <source>
        <strain>WO-1</strain>
    </source>
</reference>
<dbReference type="EC" id="4.1.1.130" evidence="1"/>
<dbReference type="EMBL" id="CH672346">
    <property type="protein sequence ID" value="EEQ42845.1"/>
    <property type="molecule type" value="Genomic_DNA"/>
</dbReference>
<dbReference type="SMR" id="C4YEV9"/>
<dbReference type="PaxDb" id="5476-C4YEV9"/>
<dbReference type="VEuPathDB" id="FungiDB:CAWG_01068"/>
<dbReference type="HOGENOM" id="CLU_061241_0_2_1"/>
<dbReference type="OMA" id="YYERHFH"/>
<dbReference type="OrthoDB" id="7722at766764"/>
<dbReference type="UniPathway" id="UPA00232"/>
<dbReference type="Proteomes" id="UP000001429">
    <property type="component" value="Chromosome 1, Supercontig 1.1"/>
</dbReference>
<dbReference type="GO" id="GO:0031314">
    <property type="term" value="C:extrinsic component of mitochondrial inner membrane"/>
    <property type="evidence" value="ECO:0007669"/>
    <property type="project" value="UniProtKB-UniRule"/>
</dbReference>
<dbReference type="GO" id="GO:0006744">
    <property type="term" value="P:ubiquinone biosynthetic process"/>
    <property type="evidence" value="ECO:0007669"/>
    <property type="project" value="UniProtKB-UniRule"/>
</dbReference>
<dbReference type="HAMAP" id="MF_03111">
    <property type="entry name" value="Coq4"/>
    <property type="match status" value="1"/>
</dbReference>
<dbReference type="InterPro" id="IPR007715">
    <property type="entry name" value="Coq4"/>
</dbReference>
<dbReference type="InterPro" id="IPR027540">
    <property type="entry name" value="Coq4_euk"/>
</dbReference>
<dbReference type="PANTHER" id="PTHR12922">
    <property type="entry name" value="UBIQUINONE BIOSYNTHESIS PROTEIN"/>
    <property type="match status" value="1"/>
</dbReference>
<dbReference type="PANTHER" id="PTHR12922:SF7">
    <property type="entry name" value="UBIQUINONE BIOSYNTHESIS PROTEIN COQ4 HOMOLOG, MITOCHONDRIAL"/>
    <property type="match status" value="1"/>
</dbReference>
<dbReference type="Pfam" id="PF05019">
    <property type="entry name" value="Coq4"/>
    <property type="match status" value="1"/>
</dbReference>
<evidence type="ECO:0000255" key="1">
    <source>
        <dbReference type="HAMAP-Rule" id="MF_03111"/>
    </source>
</evidence>
<keyword id="KW-0456">Lyase</keyword>
<keyword id="KW-0472">Membrane</keyword>
<keyword id="KW-0479">Metal-binding</keyword>
<keyword id="KW-0496">Mitochondrion</keyword>
<keyword id="KW-0999">Mitochondrion inner membrane</keyword>
<keyword id="KW-0831">Ubiquinone biosynthesis</keyword>
<keyword id="KW-0862">Zinc</keyword>
<sequence length="323" mass="37590">MLKSTVNNTRIKCGHIDQRRNYLFTTLAGTVLGSFLWSKNNVLASKMENGELHYHDPNLKFNKKLFNGKPPFERRTPDYPGHVPLYNFEKVLMFLGSSMGAFFHPEENKYIVALGESTAITPILQNLRHKMLSDPVGRTILREKPRMTSDSLNLTYLRSLPDNTIGKNYVNWLDKEHVSPDTRVAVRYIDNEELAYIYQRYRECHDFYHAITGLPIIIEGEIAVKVFEFANIGIPMSGLGALFAPLRLKSSQRQRLREIYYPWAIKNGLFSKPLINVYWEKILEKDVDEFRQEMGIQQPPDLRNMRKEYFAKKKLEKQLQGGK</sequence>
<organism>
    <name type="scientific">Candida albicans (strain WO-1)</name>
    <name type="common">Yeast</name>
    <dbReference type="NCBI Taxonomy" id="294748"/>
    <lineage>
        <taxon>Eukaryota</taxon>
        <taxon>Fungi</taxon>
        <taxon>Dikarya</taxon>
        <taxon>Ascomycota</taxon>
        <taxon>Saccharomycotina</taxon>
        <taxon>Pichiomycetes</taxon>
        <taxon>Debaryomycetaceae</taxon>
        <taxon>Candida/Lodderomyces clade</taxon>
        <taxon>Candida</taxon>
    </lineage>
</organism>
<comment type="function">
    <text evidence="1">Lyase that catalyzes the C1-decarboxylation of 4-hydroxy-3-methoxy-5-(all-trans-polyprenyl)benzoic acid into 2-methoxy-6-(all-trans-polyprenyl)phenol during ubiquinone biosynthesis.</text>
</comment>
<comment type="catalytic activity">
    <reaction evidence="1">
        <text>a 4-hydroxy-3-methoxy-5-(all-trans-polyprenyl)benzoate + H(+) = a 2-methoxy-6-(all-trans-polyprenyl)phenol + CO2</text>
        <dbReference type="Rhea" id="RHEA:81179"/>
        <dbReference type="Rhea" id="RHEA-COMP:9551"/>
        <dbReference type="Rhea" id="RHEA-COMP:10931"/>
        <dbReference type="ChEBI" id="CHEBI:15378"/>
        <dbReference type="ChEBI" id="CHEBI:16526"/>
        <dbReference type="ChEBI" id="CHEBI:62731"/>
        <dbReference type="ChEBI" id="CHEBI:84443"/>
        <dbReference type="EC" id="4.1.1.130"/>
    </reaction>
</comment>
<comment type="cofactor">
    <cofactor evidence="1">
        <name>Zn(2+)</name>
        <dbReference type="ChEBI" id="CHEBI:29105"/>
    </cofactor>
</comment>
<comment type="pathway">
    <text evidence="1">Cofactor biosynthesis; ubiquinone biosynthesis.</text>
</comment>
<comment type="subunit">
    <text evidence="1">Component of a multi-subunit COQ enzyme complex, composed of at least COQ3, COQ4, COQ5, COQ6, COQ7 and COQ9.</text>
</comment>
<comment type="subcellular location">
    <subcellularLocation>
        <location evidence="1">Mitochondrion inner membrane</location>
        <topology evidence="1">Peripheral membrane protein</topology>
        <orientation evidence="1">Matrix side</orientation>
    </subcellularLocation>
</comment>
<comment type="miscellaneous">
    <text evidence="1">This protein may be expected to contain an N-terminal transit peptide but none has been predicted.</text>
</comment>
<comment type="similarity">
    <text evidence="1">Belongs to the COQ4 family.</text>
</comment>
<name>COQ4_CANAW</name>
<feature type="chain" id="PRO_0000388102" description="Ubiquinone biosynthesis protein COQ4, mitochondrial">
    <location>
        <begin position="1"/>
        <end position="323"/>
    </location>
</feature>
<feature type="binding site" evidence="1">
    <location>
        <position position="205"/>
    </location>
    <ligand>
        <name>Zn(2+)</name>
        <dbReference type="ChEBI" id="CHEBI:29105"/>
    </ligand>
</feature>
<feature type="binding site" evidence="1">
    <location>
        <position position="206"/>
    </location>
    <ligand>
        <name>Zn(2+)</name>
        <dbReference type="ChEBI" id="CHEBI:29105"/>
    </ligand>
</feature>
<feature type="binding site" evidence="1">
    <location>
        <position position="209"/>
    </location>
    <ligand>
        <name>Zn(2+)</name>
        <dbReference type="ChEBI" id="CHEBI:29105"/>
    </ligand>
</feature>
<feature type="binding site" evidence="1">
    <location>
        <position position="221"/>
    </location>
    <ligand>
        <name>Zn(2+)</name>
        <dbReference type="ChEBI" id="CHEBI:29105"/>
    </ligand>
</feature>